<feature type="chain" id="PRO_0000111083" description="Oligoribonuclease">
    <location>
        <begin position="1"/>
        <end position="194"/>
    </location>
</feature>
<feature type="domain" description="Exonuclease" evidence="1">
    <location>
        <begin position="11"/>
        <end position="174"/>
    </location>
</feature>
<feature type="active site" evidence="1">
    <location>
        <position position="132"/>
    </location>
</feature>
<accession>Q8PKW8</accession>
<dbReference type="EC" id="3.1.15.-" evidence="1"/>
<dbReference type="EMBL" id="AE008923">
    <property type="protein sequence ID" value="AAM36901.1"/>
    <property type="molecule type" value="Genomic_DNA"/>
</dbReference>
<dbReference type="RefSeq" id="WP_003482835.1">
    <property type="nucleotide sequence ID" value="NC_003919.1"/>
</dbReference>
<dbReference type="SMR" id="Q8PKW8"/>
<dbReference type="GeneID" id="66911175"/>
<dbReference type="KEGG" id="xac:XAC2039"/>
<dbReference type="eggNOG" id="COG1949">
    <property type="taxonomic scope" value="Bacteria"/>
</dbReference>
<dbReference type="HOGENOM" id="CLU_064761_2_0_6"/>
<dbReference type="Proteomes" id="UP000000576">
    <property type="component" value="Chromosome"/>
</dbReference>
<dbReference type="GO" id="GO:0005737">
    <property type="term" value="C:cytoplasm"/>
    <property type="evidence" value="ECO:0007669"/>
    <property type="project" value="UniProtKB-SubCell"/>
</dbReference>
<dbReference type="GO" id="GO:0000175">
    <property type="term" value="F:3'-5'-RNA exonuclease activity"/>
    <property type="evidence" value="ECO:0007669"/>
    <property type="project" value="InterPro"/>
</dbReference>
<dbReference type="GO" id="GO:0003676">
    <property type="term" value="F:nucleic acid binding"/>
    <property type="evidence" value="ECO:0007669"/>
    <property type="project" value="InterPro"/>
</dbReference>
<dbReference type="GO" id="GO:0006259">
    <property type="term" value="P:DNA metabolic process"/>
    <property type="evidence" value="ECO:0007669"/>
    <property type="project" value="UniProtKB-ARBA"/>
</dbReference>
<dbReference type="CDD" id="cd06135">
    <property type="entry name" value="Orn"/>
    <property type="match status" value="1"/>
</dbReference>
<dbReference type="FunFam" id="3.30.420.10:FF:000003">
    <property type="entry name" value="Oligoribonuclease"/>
    <property type="match status" value="1"/>
</dbReference>
<dbReference type="Gene3D" id="3.30.420.10">
    <property type="entry name" value="Ribonuclease H-like superfamily/Ribonuclease H"/>
    <property type="match status" value="1"/>
</dbReference>
<dbReference type="HAMAP" id="MF_00045">
    <property type="entry name" value="Oligoribonuclease"/>
    <property type="match status" value="1"/>
</dbReference>
<dbReference type="InterPro" id="IPR013520">
    <property type="entry name" value="Exonuclease_RNaseT/DNA_pol3"/>
</dbReference>
<dbReference type="InterPro" id="IPR022894">
    <property type="entry name" value="Oligoribonuclease"/>
</dbReference>
<dbReference type="InterPro" id="IPR012337">
    <property type="entry name" value="RNaseH-like_sf"/>
</dbReference>
<dbReference type="InterPro" id="IPR036397">
    <property type="entry name" value="RNaseH_sf"/>
</dbReference>
<dbReference type="NCBIfam" id="NF003765">
    <property type="entry name" value="PRK05359.1"/>
    <property type="match status" value="1"/>
</dbReference>
<dbReference type="PANTHER" id="PTHR11046">
    <property type="entry name" value="OLIGORIBONUCLEASE, MITOCHONDRIAL"/>
    <property type="match status" value="1"/>
</dbReference>
<dbReference type="PANTHER" id="PTHR11046:SF0">
    <property type="entry name" value="OLIGORIBONUCLEASE, MITOCHONDRIAL"/>
    <property type="match status" value="1"/>
</dbReference>
<dbReference type="Pfam" id="PF00929">
    <property type="entry name" value="RNase_T"/>
    <property type="match status" value="1"/>
</dbReference>
<dbReference type="SMART" id="SM00479">
    <property type="entry name" value="EXOIII"/>
    <property type="match status" value="1"/>
</dbReference>
<dbReference type="SUPFAM" id="SSF53098">
    <property type="entry name" value="Ribonuclease H-like"/>
    <property type="match status" value="1"/>
</dbReference>
<protein>
    <recommendedName>
        <fullName evidence="1">Oligoribonuclease</fullName>
        <ecNumber evidence="1">3.1.15.-</ecNumber>
    </recommendedName>
</protein>
<keyword id="KW-0963">Cytoplasm</keyword>
<keyword id="KW-0269">Exonuclease</keyword>
<keyword id="KW-0378">Hydrolase</keyword>
<keyword id="KW-0540">Nuclease</keyword>
<gene>
    <name evidence="1" type="primary">orn</name>
    <name type="ordered locus">XAC2039</name>
</gene>
<sequence length="194" mass="21890">MAENLAGNDRLIWIDLEMTGLDTDRDSIIEIATIVTDAQLNVLAEGPELAIAHPLETLEAMDEWNRNQHRRSGLWQRVIDSQVTHAQAEAQTVAFLSEWIRAGASPMCGNSICQDRRFLHRQMSRLERYFHYRNLDVSTIKELARRWAPTVANGFAKSSAHTALSDVRDSIDELRHYRQFMGALGGDTAAGVEN</sequence>
<comment type="function">
    <text evidence="1">3'-to-5' exoribonuclease specific for small oligoribonucleotides.</text>
</comment>
<comment type="subcellular location">
    <subcellularLocation>
        <location evidence="1">Cytoplasm</location>
    </subcellularLocation>
</comment>
<comment type="similarity">
    <text evidence="1">Belongs to the oligoribonuclease family.</text>
</comment>
<evidence type="ECO:0000255" key="1">
    <source>
        <dbReference type="HAMAP-Rule" id="MF_00045"/>
    </source>
</evidence>
<reference key="1">
    <citation type="journal article" date="2002" name="Nature">
        <title>Comparison of the genomes of two Xanthomonas pathogens with differing host specificities.</title>
        <authorList>
            <person name="da Silva A.C.R."/>
            <person name="Ferro J.A."/>
            <person name="Reinach F.C."/>
            <person name="Farah C.S."/>
            <person name="Furlan L.R."/>
            <person name="Quaggio R.B."/>
            <person name="Monteiro-Vitorello C.B."/>
            <person name="Van Sluys M.A."/>
            <person name="Almeida N.F. Jr."/>
            <person name="Alves L.M.C."/>
            <person name="do Amaral A.M."/>
            <person name="Bertolini M.C."/>
            <person name="Camargo L.E.A."/>
            <person name="Camarotte G."/>
            <person name="Cannavan F."/>
            <person name="Cardozo J."/>
            <person name="Chambergo F."/>
            <person name="Ciapina L.P."/>
            <person name="Cicarelli R.M.B."/>
            <person name="Coutinho L.L."/>
            <person name="Cursino-Santos J.R."/>
            <person name="El-Dorry H."/>
            <person name="Faria J.B."/>
            <person name="Ferreira A.J.S."/>
            <person name="Ferreira R.C.C."/>
            <person name="Ferro M.I.T."/>
            <person name="Formighieri E.F."/>
            <person name="Franco M.C."/>
            <person name="Greggio C.C."/>
            <person name="Gruber A."/>
            <person name="Katsuyama A.M."/>
            <person name="Kishi L.T."/>
            <person name="Leite R.P."/>
            <person name="Lemos E.G.M."/>
            <person name="Lemos M.V.F."/>
            <person name="Locali E.C."/>
            <person name="Machado M.A."/>
            <person name="Madeira A.M.B.N."/>
            <person name="Martinez-Rossi N.M."/>
            <person name="Martins E.C."/>
            <person name="Meidanis J."/>
            <person name="Menck C.F.M."/>
            <person name="Miyaki C.Y."/>
            <person name="Moon D.H."/>
            <person name="Moreira L.M."/>
            <person name="Novo M.T.M."/>
            <person name="Okura V.K."/>
            <person name="Oliveira M.C."/>
            <person name="Oliveira V.R."/>
            <person name="Pereira H.A."/>
            <person name="Rossi A."/>
            <person name="Sena J.A.D."/>
            <person name="Silva C."/>
            <person name="de Souza R.F."/>
            <person name="Spinola L.A.F."/>
            <person name="Takita M.A."/>
            <person name="Tamura R.E."/>
            <person name="Teixeira E.C."/>
            <person name="Tezza R.I.D."/>
            <person name="Trindade dos Santos M."/>
            <person name="Truffi D."/>
            <person name="Tsai S.M."/>
            <person name="White F.F."/>
            <person name="Setubal J.C."/>
            <person name="Kitajima J.P."/>
        </authorList>
    </citation>
    <scope>NUCLEOTIDE SEQUENCE [LARGE SCALE GENOMIC DNA]</scope>
    <source>
        <strain>306</strain>
    </source>
</reference>
<proteinExistence type="inferred from homology"/>
<organism>
    <name type="scientific">Xanthomonas axonopodis pv. citri (strain 306)</name>
    <dbReference type="NCBI Taxonomy" id="190486"/>
    <lineage>
        <taxon>Bacteria</taxon>
        <taxon>Pseudomonadati</taxon>
        <taxon>Pseudomonadota</taxon>
        <taxon>Gammaproteobacteria</taxon>
        <taxon>Lysobacterales</taxon>
        <taxon>Lysobacteraceae</taxon>
        <taxon>Xanthomonas</taxon>
    </lineage>
</organism>
<name>ORN_XANAC</name>